<name>RS15_THEVB</name>
<comment type="function">
    <text evidence="1">One of the primary rRNA binding proteins, it binds directly to 16S rRNA where it helps nucleate assembly of the platform of the 30S subunit by binding and bridging several RNA helices of the 16S rRNA.</text>
</comment>
<comment type="function">
    <text evidence="1">Forms an intersubunit bridge (bridge B4) with the 23S rRNA of the 50S subunit in the ribosome.</text>
</comment>
<comment type="subunit">
    <text evidence="1">Part of the 30S ribosomal subunit. Forms a bridge to the 50S subunit in the 70S ribosome, contacting the 23S rRNA.</text>
</comment>
<comment type="similarity">
    <text evidence="1">Belongs to the universal ribosomal protein uS15 family.</text>
</comment>
<comment type="sequence caution" evidence="2">
    <conflict type="erroneous initiation">
        <sequence resource="EMBL-CDS" id="BAC08759"/>
    </conflict>
</comment>
<dbReference type="EMBL" id="BA000039">
    <property type="protein sequence ID" value="BAC08759.1"/>
    <property type="status" value="ALT_INIT"/>
    <property type="molecule type" value="Genomic_DNA"/>
</dbReference>
<dbReference type="RefSeq" id="NP_681997.2">
    <property type="nucleotide sequence ID" value="NC_004113.1"/>
</dbReference>
<dbReference type="RefSeq" id="WP_011057049.1">
    <property type="nucleotide sequence ID" value="NC_004113.1"/>
</dbReference>
<dbReference type="SMR" id="Q8DJL5"/>
<dbReference type="STRING" id="197221.gene:10747803"/>
<dbReference type="EnsemblBacteria" id="BAC08759">
    <property type="protein sequence ID" value="BAC08759"/>
    <property type="gene ID" value="BAC08759"/>
</dbReference>
<dbReference type="KEGG" id="tel:tsr1207"/>
<dbReference type="PATRIC" id="fig|197221.4.peg.1271"/>
<dbReference type="eggNOG" id="COG0184">
    <property type="taxonomic scope" value="Bacteria"/>
</dbReference>
<dbReference type="Proteomes" id="UP000000440">
    <property type="component" value="Chromosome"/>
</dbReference>
<dbReference type="GO" id="GO:0022627">
    <property type="term" value="C:cytosolic small ribosomal subunit"/>
    <property type="evidence" value="ECO:0007669"/>
    <property type="project" value="TreeGrafter"/>
</dbReference>
<dbReference type="GO" id="GO:0019843">
    <property type="term" value="F:rRNA binding"/>
    <property type="evidence" value="ECO:0007669"/>
    <property type="project" value="UniProtKB-UniRule"/>
</dbReference>
<dbReference type="GO" id="GO:0003735">
    <property type="term" value="F:structural constituent of ribosome"/>
    <property type="evidence" value="ECO:0007669"/>
    <property type="project" value="InterPro"/>
</dbReference>
<dbReference type="GO" id="GO:0006412">
    <property type="term" value="P:translation"/>
    <property type="evidence" value="ECO:0007669"/>
    <property type="project" value="UniProtKB-UniRule"/>
</dbReference>
<dbReference type="CDD" id="cd00353">
    <property type="entry name" value="Ribosomal_S15p_S13e"/>
    <property type="match status" value="1"/>
</dbReference>
<dbReference type="FunFam" id="1.10.287.10:FF:000002">
    <property type="entry name" value="30S ribosomal protein S15"/>
    <property type="match status" value="1"/>
</dbReference>
<dbReference type="Gene3D" id="6.10.250.3130">
    <property type="match status" value="1"/>
</dbReference>
<dbReference type="Gene3D" id="1.10.287.10">
    <property type="entry name" value="S15/NS1, RNA-binding"/>
    <property type="match status" value="1"/>
</dbReference>
<dbReference type="HAMAP" id="MF_01343_B">
    <property type="entry name" value="Ribosomal_uS15_B"/>
    <property type="match status" value="1"/>
</dbReference>
<dbReference type="InterPro" id="IPR000589">
    <property type="entry name" value="Ribosomal_uS15"/>
</dbReference>
<dbReference type="InterPro" id="IPR005290">
    <property type="entry name" value="Ribosomal_uS15_bac-type"/>
</dbReference>
<dbReference type="InterPro" id="IPR009068">
    <property type="entry name" value="uS15_NS1_RNA-bd_sf"/>
</dbReference>
<dbReference type="NCBIfam" id="TIGR00952">
    <property type="entry name" value="S15_bact"/>
    <property type="match status" value="1"/>
</dbReference>
<dbReference type="PANTHER" id="PTHR23321">
    <property type="entry name" value="RIBOSOMAL PROTEIN S15, BACTERIAL AND ORGANELLAR"/>
    <property type="match status" value="1"/>
</dbReference>
<dbReference type="PANTHER" id="PTHR23321:SF26">
    <property type="entry name" value="SMALL RIBOSOMAL SUBUNIT PROTEIN US15M"/>
    <property type="match status" value="1"/>
</dbReference>
<dbReference type="Pfam" id="PF00312">
    <property type="entry name" value="Ribosomal_S15"/>
    <property type="match status" value="1"/>
</dbReference>
<dbReference type="SMART" id="SM01387">
    <property type="entry name" value="Ribosomal_S15"/>
    <property type="match status" value="1"/>
</dbReference>
<dbReference type="SUPFAM" id="SSF47060">
    <property type="entry name" value="S15/NS1 RNA-binding domain"/>
    <property type="match status" value="1"/>
</dbReference>
<dbReference type="PROSITE" id="PS00362">
    <property type="entry name" value="RIBOSOMAL_S15"/>
    <property type="match status" value="1"/>
</dbReference>
<proteinExistence type="inferred from homology"/>
<feature type="chain" id="PRO_0000115565" description="Small ribosomal subunit protein uS15">
    <location>
        <begin position="1"/>
        <end position="89"/>
    </location>
</feature>
<sequence length="89" mass="10442">MALQHDVKQEIINTYQIHGTDTGSTDVQVAILTERIKQLSEHLKVNKKDHASRRGLLKIIGRRKRLLAYLYRHDPQRYQQLIERLGIRG</sequence>
<gene>
    <name evidence="1" type="primary">rpsO</name>
    <name evidence="1" type="synonym">rps15</name>
    <name type="ordered locus">tsr1207</name>
</gene>
<organism>
    <name type="scientific">Thermosynechococcus vestitus (strain NIES-2133 / IAM M-273 / BP-1)</name>
    <dbReference type="NCBI Taxonomy" id="197221"/>
    <lineage>
        <taxon>Bacteria</taxon>
        <taxon>Bacillati</taxon>
        <taxon>Cyanobacteriota</taxon>
        <taxon>Cyanophyceae</taxon>
        <taxon>Acaryochloridales</taxon>
        <taxon>Thermosynechococcaceae</taxon>
        <taxon>Thermosynechococcus</taxon>
    </lineage>
</organism>
<keyword id="KW-1185">Reference proteome</keyword>
<keyword id="KW-0687">Ribonucleoprotein</keyword>
<keyword id="KW-0689">Ribosomal protein</keyword>
<keyword id="KW-0694">RNA-binding</keyword>
<keyword id="KW-0699">rRNA-binding</keyword>
<reference key="1">
    <citation type="journal article" date="2002" name="DNA Res.">
        <title>Complete genome structure of the thermophilic cyanobacterium Thermosynechococcus elongatus BP-1.</title>
        <authorList>
            <person name="Nakamura Y."/>
            <person name="Kaneko T."/>
            <person name="Sato S."/>
            <person name="Ikeuchi M."/>
            <person name="Katoh H."/>
            <person name="Sasamoto S."/>
            <person name="Watanabe A."/>
            <person name="Iriguchi M."/>
            <person name="Kawashima K."/>
            <person name="Kimura T."/>
            <person name="Kishida Y."/>
            <person name="Kiyokawa C."/>
            <person name="Kohara M."/>
            <person name="Matsumoto M."/>
            <person name="Matsuno A."/>
            <person name="Nakazaki N."/>
            <person name="Shimpo S."/>
            <person name="Sugimoto M."/>
            <person name="Takeuchi C."/>
            <person name="Yamada M."/>
            <person name="Tabata S."/>
        </authorList>
    </citation>
    <scope>NUCLEOTIDE SEQUENCE [LARGE SCALE GENOMIC DNA]</scope>
    <source>
        <strain>NIES-2133 / IAM M-273 / BP-1</strain>
    </source>
</reference>
<accession>Q8DJL5</accession>
<protein>
    <recommendedName>
        <fullName evidence="1">Small ribosomal subunit protein uS15</fullName>
    </recommendedName>
    <alternativeName>
        <fullName evidence="2">30S ribosomal protein S15</fullName>
    </alternativeName>
</protein>
<evidence type="ECO:0000255" key="1">
    <source>
        <dbReference type="HAMAP-Rule" id="MF_01343"/>
    </source>
</evidence>
<evidence type="ECO:0000305" key="2"/>